<comment type="catalytic activity">
    <reaction evidence="1">
        <text>2-formamido-N(1)-(5-O-phospho-beta-D-ribosyl)acetamidine + ATP = 5-amino-1-(5-phospho-beta-D-ribosyl)imidazole + ADP + phosphate + H(+)</text>
        <dbReference type="Rhea" id="RHEA:23032"/>
        <dbReference type="ChEBI" id="CHEBI:15378"/>
        <dbReference type="ChEBI" id="CHEBI:30616"/>
        <dbReference type="ChEBI" id="CHEBI:43474"/>
        <dbReference type="ChEBI" id="CHEBI:137981"/>
        <dbReference type="ChEBI" id="CHEBI:147287"/>
        <dbReference type="ChEBI" id="CHEBI:456216"/>
        <dbReference type="EC" id="6.3.3.1"/>
    </reaction>
</comment>
<comment type="pathway">
    <text evidence="1">Purine metabolism; IMP biosynthesis via de novo pathway; 5-amino-1-(5-phospho-D-ribosyl)imidazole from N(2)-formyl-N(1)-(5-phospho-D-ribosyl)glycinamide: step 2/2.</text>
</comment>
<comment type="subcellular location">
    <subcellularLocation>
        <location evidence="1">Cytoplasm</location>
    </subcellularLocation>
</comment>
<comment type="similarity">
    <text evidence="1">Belongs to the AIR synthase family.</text>
</comment>
<evidence type="ECO:0000255" key="1">
    <source>
        <dbReference type="HAMAP-Rule" id="MF_00741"/>
    </source>
</evidence>
<name>PUR5_JANSC</name>
<proteinExistence type="inferred from homology"/>
<organism>
    <name type="scientific">Jannaschia sp. (strain CCS1)</name>
    <dbReference type="NCBI Taxonomy" id="290400"/>
    <lineage>
        <taxon>Bacteria</taxon>
        <taxon>Pseudomonadati</taxon>
        <taxon>Pseudomonadota</taxon>
        <taxon>Alphaproteobacteria</taxon>
        <taxon>Rhodobacterales</taxon>
        <taxon>Roseobacteraceae</taxon>
        <taxon>Jannaschia</taxon>
    </lineage>
</organism>
<feature type="chain" id="PRO_0000258362" description="Phosphoribosylformylglycinamidine cyclo-ligase">
    <location>
        <begin position="1"/>
        <end position="349"/>
    </location>
</feature>
<accession>Q28RA9</accession>
<dbReference type="EC" id="6.3.3.1" evidence="1"/>
<dbReference type="EMBL" id="CP000264">
    <property type="protein sequence ID" value="ABD54753.1"/>
    <property type="molecule type" value="Genomic_DNA"/>
</dbReference>
<dbReference type="RefSeq" id="WP_011454958.1">
    <property type="nucleotide sequence ID" value="NC_007802.1"/>
</dbReference>
<dbReference type="SMR" id="Q28RA9"/>
<dbReference type="STRING" id="290400.Jann_1836"/>
<dbReference type="KEGG" id="jan:Jann_1836"/>
<dbReference type="eggNOG" id="COG0150">
    <property type="taxonomic scope" value="Bacteria"/>
</dbReference>
<dbReference type="HOGENOM" id="CLU_047116_0_0_5"/>
<dbReference type="OrthoDB" id="9777881at2"/>
<dbReference type="UniPathway" id="UPA00074">
    <property type="reaction ID" value="UER00129"/>
</dbReference>
<dbReference type="Proteomes" id="UP000008326">
    <property type="component" value="Chromosome"/>
</dbReference>
<dbReference type="GO" id="GO:0005829">
    <property type="term" value="C:cytosol"/>
    <property type="evidence" value="ECO:0007669"/>
    <property type="project" value="TreeGrafter"/>
</dbReference>
<dbReference type="GO" id="GO:0005524">
    <property type="term" value="F:ATP binding"/>
    <property type="evidence" value="ECO:0007669"/>
    <property type="project" value="UniProtKB-KW"/>
</dbReference>
<dbReference type="GO" id="GO:0004637">
    <property type="term" value="F:phosphoribosylamine-glycine ligase activity"/>
    <property type="evidence" value="ECO:0007669"/>
    <property type="project" value="TreeGrafter"/>
</dbReference>
<dbReference type="GO" id="GO:0004641">
    <property type="term" value="F:phosphoribosylformylglycinamidine cyclo-ligase activity"/>
    <property type="evidence" value="ECO:0007669"/>
    <property type="project" value="UniProtKB-UniRule"/>
</dbReference>
<dbReference type="GO" id="GO:0006189">
    <property type="term" value="P:'de novo' IMP biosynthetic process"/>
    <property type="evidence" value="ECO:0007669"/>
    <property type="project" value="UniProtKB-UniRule"/>
</dbReference>
<dbReference type="GO" id="GO:0046084">
    <property type="term" value="P:adenine biosynthetic process"/>
    <property type="evidence" value="ECO:0007669"/>
    <property type="project" value="TreeGrafter"/>
</dbReference>
<dbReference type="CDD" id="cd02196">
    <property type="entry name" value="PurM"/>
    <property type="match status" value="1"/>
</dbReference>
<dbReference type="FunFam" id="3.30.1330.10:FF:000001">
    <property type="entry name" value="Phosphoribosylformylglycinamidine cyclo-ligase"/>
    <property type="match status" value="1"/>
</dbReference>
<dbReference type="FunFam" id="3.90.650.10:FF:000011">
    <property type="entry name" value="Phosphoribosylformylglycinamidine cyclo-ligase"/>
    <property type="match status" value="1"/>
</dbReference>
<dbReference type="Gene3D" id="3.90.650.10">
    <property type="entry name" value="PurM-like C-terminal domain"/>
    <property type="match status" value="1"/>
</dbReference>
<dbReference type="Gene3D" id="3.30.1330.10">
    <property type="entry name" value="PurM-like, N-terminal domain"/>
    <property type="match status" value="1"/>
</dbReference>
<dbReference type="HAMAP" id="MF_00741">
    <property type="entry name" value="AIRS"/>
    <property type="match status" value="1"/>
</dbReference>
<dbReference type="InterPro" id="IPR010918">
    <property type="entry name" value="PurM-like_C_dom"/>
</dbReference>
<dbReference type="InterPro" id="IPR036676">
    <property type="entry name" value="PurM-like_C_sf"/>
</dbReference>
<dbReference type="InterPro" id="IPR016188">
    <property type="entry name" value="PurM-like_N"/>
</dbReference>
<dbReference type="InterPro" id="IPR036921">
    <property type="entry name" value="PurM-like_N_sf"/>
</dbReference>
<dbReference type="InterPro" id="IPR004733">
    <property type="entry name" value="PurM_cligase"/>
</dbReference>
<dbReference type="NCBIfam" id="TIGR00878">
    <property type="entry name" value="purM"/>
    <property type="match status" value="1"/>
</dbReference>
<dbReference type="PANTHER" id="PTHR10520:SF12">
    <property type="entry name" value="TRIFUNCTIONAL PURINE BIOSYNTHETIC PROTEIN ADENOSINE-3"/>
    <property type="match status" value="1"/>
</dbReference>
<dbReference type="PANTHER" id="PTHR10520">
    <property type="entry name" value="TRIFUNCTIONAL PURINE BIOSYNTHETIC PROTEIN ADENOSINE-3-RELATED"/>
    <property type="match status" value="1"/>
</dbReference>
<dbReference type="Pfam" id="PF00586">
    <property type="entry name" value="AIRS"/>
    <property type="match status" value="1"/>
</dbReference>
<dbReference type="Pfam" id="PF02769">
    <property type="entry name" value="AIRS_C"/>
    <property type="match status" value="1"/>
</dbReference>
<dbReference type="SUPFAM" id="SSF56042">
    <property type="entry name" value="PurM C-terminal domain-like"/>
    <property type="match status" value="1"/>
</dbReference>
<dbReference type="SUPFAM" id="SSF55326">
    <property type="entry name" value="PurM N-terminal domain-like"/>
    <property type="match status" value="1"/>
</dbReference>
<reference key="1">
    <citation type="submission" date="2006-02" db="EMBL/GenBank/DDBJ databases">
        <title>Complete sequence of chromosome of Jannaschia sp. CCS1.</title>
        <authorList>
            <consortium name="US DOE Joint Genome Institute"/>
            <person name="Copeland A."/>
            <person name="Lucas S."/>
            <person name="Lapidus A."/>
            <person name="Barry K."/>
            <person name="Detter J.C."/>
            <person name="Glavina del Rio T."/>
            <person name="Hammon N."/>
            <person name="Israni S."/>
            <person name="Pitluck S."/>
            <person name="Brettin T."/>
            <person name="Bruce D."/>
            <person name="Han C."/>
            <person name="Tapia R."/>
            <person name="Gilna P."/>
            <person name="Chertkov O."/>
            <person name="Saunders E."/>
            <person name="Schmutz J."/>
            <person name="Larimer F."/>
            <person name="Land M."/>
            <person name="Kyrpides N."/>
            <person name="Lykidis A."/>
            <person name="Moran M.A."/>
            <person name="Belas R."/>
            <person name="Ye W."/>
            <person name="Buchan A."/>
            <person name="Gonzalez J.M."/>
            <person name="Schell M.A."/>
            <person name="Richardson P."/>
        </authorList>
    </citation>
    <scope>NUCLEOTIDE SEQUENCE [LARGE SCALE GENOMIC DNA]</scope>
    <source>
        <strain>CCS1</strain>
    </source>
</reference>
<gene>
    <name evidence="1" type="primary">purM</name>
    <name type="ordered locus">Jann_1836</name>
</gene>
<sequence length="349" mass="35418">MTDSKPDALTYADAGVDIDAGNALVDRIKPAAAATNRAGVMAGLGGFGALFDLKAAGYDDPVLVAATDGVGTKLKIAIDTGNFDTIGVDLVAMCVNDLVCQGAEPLFFLDYFATGKLDVDDAARIVEGIAAGCKASGCALIGGETAEMPGMYAPGDFDLAGFSVGAMERGRALPDGVAEGDVLLGLASDGVHSNGYSLVRRVVERSGLAWDAPAPFAQSSLGEALLAPTRLYVQPALAAIRAGGVHALAHITGGGLTENIPRVLPDGLGVDIDLSSWSLPPVFGWLAQEGALDQAELLKTFNAGLGMVLVVSADAVDGLTWTLEDAGESVHRIGTVTAGAGVRYSGSLG</sequence>
<keyword id="KW-0067">ATP-binding</keyword>
<keyword id="KW-0963">Cytoplasm</keyword>
<keyword id="KW-0436">Ligase</keyword>
<keyword id="KW-0547">Nucleotide-binding</keyword>
<keyword id="KW-0658">Purine biosynthesis</keyword>
<keyword id="KW-1185">Reference proteome</keyword>
<protein>
    <recommendedName>
        <fullName evidence="1">Phosphoribosylformylglycinamidine cyclo-ligase</fullName>
        <ecNumber evidence="1">6.3.3.1</ecNumber>
    </recommendedName>
    <alternativeName>
        <fullName evidence="1">AIR synthase</fullName>
    </alternativeName>
    <alternativeName>
        <fullName evidence="1">AIRS</fullName>
    </alternativeName>
    <alternativeName>
        <fullName evidence="1">Phosphoribosyl-aminoimidazole synthetase</fullName>
    </alternativeName>
</protein>